<keyword id="KW-0997">Cell inner membrane</keyword>
<keyword id="KW-1003">Cell membrane</keyword>
<keyword id="KW-0472">Membrane</keyword>
<keyword id="KW-1185">Reference proteome</keyword>
<keyword id="KW-0812">Transmembrane</keyword>
<keyword id="KW-1133">Transmembrane helix</keyword>
<keyword id="KW-0813">Transport</keyword>
<accession>A7MHJ1</accession>
<proteinExistence type="inferred from homology"/>
<evidence type="ECO:0000255" key="1">
    <source>
        <dbReference type="HAMAP-Rule" id="MF_01423"/>
    </source>
</evidence>
<gene>
    <name evidence="1" type="primary">mdtB</name>
    <name type="ordered locus">ESA_01143</name>
</gene>
<feature type="chain" id="PRO_1000024303" description="Multidrug resistance protein MdtB">
    <location>
        <begin position="1"/>
        <end position="1040"/>
    </location>
</feature>
<feature type="transmembrane region" description="Helical" evidence="1">
    <location>
        <begin position="16"/>
        <end position="36"/>
    </location>
</feature>
<feature type="transmembrane region" description="Helical" evidence="1">
    <location>
        <begin position="347"/>
        <end position="367"/>
    </location>
</feature>
<feature type="transmembrane region" description="Helical" evidence="1">
    <location>
        <begin position="369"/>
        <end position="389"/>
    </location>
</feature>
<feature type="transmembrane region" description="Helical" evidence="1">
    <location>
        <begin position="396"/>
        <end position="416"/>
    </location>
</feature>
<feature type="transmembrane region" description="Helical" evidence="1">
    <location>
        <begin position="440"/>
        <end position="460"/>
    </location>
</feature>
<feature type="transmembrane region" description="Helical" evidence="1">
    <location>
        <begin position="472"/>
        <end position="492"/>
    </location>
</feature>
<feature type="transmembrane region" description="Helical" evidence="1">
    <location>
        <begin position="537"/>
        <end position="557"/>
    </location>
</feature>
<feature type="transmembrane region" description="Helical" evidence="1">
    <location>
        <begin position="863"/>
        <end position="883"/>
    </location>
</feature>
<feature type="transmembrane region" description="Helical" evidence="1">
    <location>
        <begin position="888"/>
        <end position="908"/>
    </location>
</feature>
<feature type="transmembrane region" description="Helical" evidence="1">
    <location>
        <begin position="911"/>
        <end position="931"/>
    </location>
</feature>
<feature type="transmembrane region" description="Helical" evidence="1">
    <location>
        <begin position="968"/>
        <end position="988"/>
    </location>
</feature>
<feature type="transmembrane region" description="Helical" evidence="1">
    <location>
        <begin position="998"/>
        <end position="1018"/>
    </location>
</feature>
<organism>
    <name type="scientific">Cronobacter sakazakii (strain ATCC BAA-894)</name>
    <name type="common">Enterobacter sakazakii</name>
    <dbReference type="NCBI Taxonomy" id="290339"/>
    <lineage>
        <taxon>Bacteria</taxon>
        <taxon>Pseudomonadati</taxon>
        <taxon>Pseudomonadota</taxon>
        <taxon>Gammaproteobacteria</taxon>
        <taxon>Enterobacterales</taxon>
        <taxon>Enterobacteriaceae</taxon>
        <taxon>Cronobacter</taxon>
    </lineage>
</organism>
<comment type="subunit">
    <text evidence="1">Part of a tripartite efflux system composed of MdtA, MdtB and MdtC. MdtB forms a heteromultimer with MdtC.</text>
</comment>
<comment type="subcellular location">
    <subcellularLocation>
        <location evidence="1">Cell inner membrane</location>
        <topology evidence="1">Multi-pass membrane protein</topology>
    </subcellularLocation>
</comment>
<comment type="similarity">
    <text evidence="1">Belongs to the resistance-nodulation-cell division (RND) (TC 2.A.6) family. MdtB subfamily.</text>
</comment>
<reference key="1">
    <citation type="journal article" date="2010" name="PLoS ONE">
        <title>Genome sequence of Cronobacter sakazakii BAA-894 and comparative genomic hybridization analysis with other Cronobacter species.</title>
        <authorList>
            <person name="Kucerova E."/>
            <person name="Clifton S.W."/>
            <person name="Xia X.Q."/>
            <person name="Long F."/>
            <person name="Porwollik S."/>
            <person name="Fulton L."/>
            <person name="Fronick C."/>
            <person name="Minx P."/>
            <person name="Kyung K."/>
            <person name="Warren W."/>
            <person name="Fulton R."/>
            <person name="Feng D."/>
            <person name="Wollam A."/>
            <person name="Shah N."/>
            <person name="Bhonagiri V."/>
            <person name="Nash W.E."/>
            <person name="Hallsworth-Pepin K."/>
            <person name="Wilson R.K."/>
            <person name="McClelland M."/>
            <person name="Forsythe S.J."/>
        </authorList>
    </citation>
    <scope>NUCLEOTIDE SEQUENCE [LARGE SCALE GENOMIC DNA]</scope>
    <source>
        <strain>ATCC BAA-894</strain>
    </source>
</reference>
<protein>
    <recommendedName>
        <fullName evidence="1">Multidrug resistance protein MdtB</fullName>
    </recommendedName>
    <alternativeName>
        <fullName evidence="1">Multidrug transporter MdtB</fullName>
    </alternativeName>
</protein>
<name>MDTB_CROS8</name>
<sequence length="1040" mass="111499">MQVLPPSATGGPSRLFILRPVATTLLMVAILLAGIIGYRFLPVSALPEVDYPTIQVVTLYPGASPDVVTSAITAPLERQFGQMSGLKQMASQSAGGASVVTLQFQLTLPLDVAEQEVQAAINAATNLLPDDLPNPPVYSKVNPADPPIMTLAVTSSALPMTQVEDMVETRVAQRISQVTGVGLVTLSGGQRPAVRVKLNAQALASLGIDSETVRTAITSANVNSAKGSFDGPERAVTLSANDQMKSADEYRNLIIAYKNGAPVRLGDVATVEQGAENAWLGAWANKQPAIVMNVQRQPGANIITTAETIQKLLPQLTESLPKSVQVKVLTDRTTNISASVNDTQFELMLAIALVVMIIYLFLRNIPATIIPAVAVPLSLVGTFAVMVFLDFSINNLTLMALTIATGFVVDDAIVVIENISRYIEKGEKPLAAALKGAGEIGFTIISLTFSLIAVLIPLLFMGDIVGRLFREFAVTLAVAILISAVVSLTLTPMMCARMLSHESLRKQNRFSRASERVINRVIARYGQLLKRVLNHPWLTLGVALGTLALTVLLWIFIPKGFFPVQDNGIIQGTLQAPQSVSFASMAERQRAVADVILKDPAVESLTSFVGVDGTNPSLNSARLQINLKPLDDRDDRVQTVIARLQEAASRVPGATLYLQPIQDLTIDTQVSRTQYQFTLQANSLEALSTWVPKLIARLQTLPQLADVSSDWQDNGLVAYVNVDRASASRLGISMSDVDNALYNAFGQRLISTIYTQANQYRVVLEHNTTATPGLAALDGIRLASSDGGMVPLSAIAKVEQRFGPLTINHLDQFPSTTISFNVPDGYSLGDAVDAITQAEADLAFPAEITTQFQGSTLAFQAALGSTLWLILASVVAMYIVLGVLYESFIHPITILSTLPTAGVGALLALLIAGAELDVIAIIGIILLIGIVKKNAIMMIDFALAAEREQGMTPREAIYQACLLRFRPILMTTLAALLGALPLMLSTGVGAELRRPLGIGMVGGLLVSQVLTLFTTPVIYLLFDRLGHAVRRRLPAREEEA</sequence>
<dbReference type="EMBL" id="CP000783">
    <property type="protein sequence ID" value="ABU76410.1"/>
    <property type="molecule type" value="Genomic_DNA"/>
</dbReference>
<dbReference type="RefSeq" id="WP_012124312.1">
    <property type="nucleotide sequence ID" value="NC_009778.1"/>
</dbReference>
<dbReference type="SMR" id="A7MHJ1"/>
<dbReference type="KEGG" id="esa:ESA_01143"/>
<dbReference type="PATRIC" id="fig|290339.8.peg.1013"/>
<dbReference type="HOGENOM" id="CLU_002755_1_2_6"/>
<dbReference type="Proteomes" id="UP000000260">
    <property type="component" value="Chromosome"/>
</dbReference>
<dbReference type="GO" id="GO:0005886">
    <property type="term" value="C:plasma membrane"/>
    <property type="evidence" value="ECO:0007669"/>
    <property type="project" value="UniProtKB-SubCell"/>
</dbReference>
<dbReference type="GO" id="GO:0042910">
    <property type="term" value="F:xenobiotic transmembrane transporter activity"/>
    <property type="evidence" value="ECO:0007669"/>
    <property type="project" value="TreeGrafter"/>
</dbReference>
<dbReference type="FunFam" id="1.20.1640.10:FF:000001">
    <property type="entry name" value="Efflux pump membrane transporter"/>
    <property type="match status" value="1"/>
</dbReference>
<dbReference type="FunFam" id="3.30.70.1430:FF:000001">
    <property type="entry name" value="Efflux pump membrane transporter"/>
    <property type="match status" value="1"/>
</dbReference>
<dbReference type="Gene3D" id="3.30.70.1430">
    <property type="entry name" value="Multidrug efflux transporter AcrB pore domain"/>
    <property type="match status" value="2"/>
</dbReference>
<dbReference type="Gene3D" id="3.30.70.1440">
    <property type="entry name" value="Multidrug efflux transporter AcrB pore domain"/>
    <property type="match status" value="1"/>
</dbReference>
<dbReference type="Gene3D" id="3.30.70.1320">
    <property type="entry name" value="Multidrug efflux transporter AcrB pore domain like"/>
    <property type="match status" value="1"/>
</dbReference>
<dbReference type="Gene3D" id="3.30.2090.10">
    <property type="entry name" value="Multidrug efflux transporter AcrB TolC docking domain, DN and DC subdomains"/>
    <property type="match status" value="2"/>
</dbReference>
<dbReference type="Gene3D" id="1.20.1640.10">
    <property type="entry name" value="Multidrug efflux transporter AcrB transmembrane domain"/>
    <property type="match status" value="2"/>
</dbReference>
<dbReference type="HAMAP" id="MF_01423">
    <property type="entry name" value="MdtB"/>
    <property type="match status" value="1"/>
</dbReference>
<dbReference type="InterPro" id="IPR027463">
    <property type="entry name" value="AcrB_DN_DC_subdom"/>
</dbReference>
<dbReference type="InterPro" id="IPR001036">
    <property type="entry name" value="Acrflvin-R"/>
</dbReference>
<dbReference type="InterPro" id="IPR022831">
    <property type="entry name" value="Multidrug-R_MdtB"/>
</dbReference>
<dbReference type="NCBIfam" id="NF007798">
    <property type="entry name" value="PRK10503.1"/>
    <property type="match status" value="1"/>
</dbReference>
<dbReference type="NCBIfam" id="NF033617">
    <property type="entry name" value="RND_permease_2"/>
    <property type="match status" value="1"/>
</dbReference>
<dbReference type="PANTHER" id="PTHR32063">
    <property type="match status" value="1"/>
</dbReference>
<dbReference type="PANTHER" id="PTHR32063:SF21">
    <property type="entry name" value="MULTIDRUG RESISTANCE PROTEIN MDTB"/>
    <property type="match status" value="1"/>
</dbReference>
<dbReference type="Pfam" id="PF00873">
    <property type="entry name" value="ACR_tran"/>
    <property type="match status" value="1"/>
</dbReference>
<dbReference type="PRINTS" id="PR00702">
    <property type="entry name" value="ACRIFLAVINRP"/>
</dbReference>
<dbReference type="SUPFAM" id="SSF82693">
    <property type="entry name" value="Multidrug efflux transporter AcrB pore domain, PN1, PN2, PC1 and PC2 subdomains"/>
    <property type="match status" value="3"/>
</dbReference>
<dbReference type="SUPFAM" id="SSF82714">
    <property type="entry name" value="Multidrug efflux transporter AcrB TolC docking domain, DN and DC subdomains"/>
    <property type="match status" value="2"/>
</dbReference>
<dbReference type="SUPFAM" id="SSF82866">
    <property type="entry name" value="Multidrug efflux transporter AcrB transmembrane domain"/>
    <property type="match status" value="2"/>
</dbReference>